<accession>Q5PDF8</accession>
<sequence>MLKLIDITWLYHHLPMRFTLAVERGEQVAILGPSGAGKSTLLNLIAGFLAPASGTLLIAGEDHTLTPPSRRPVSMLFQENNLFSHLNVQQNIGLGLNPGLTLNASQREKRDAIARQMGIESLMTRLPGELSGGQRQRVALARCLVREQPVLLLDEPFSALDPALRQEMLTLVSDICRERQLTLLMVSHSVEDAARIAPRSIVVADGRIAWQGKTDELLSGQASASALLGIKSHIL</sequence>
<evidence type="ECO:0000255" key="1">
    <source>
        <dbReference type="HAMAP-Rule" id="MF_01723"/>
    </source>
</evidence>
<protein>
    <recommendedName>
        <fullName evidence="1">Thiamine import ATP-binding protein ThiQ</fullName>
        <ecNumber evidence="1">7.6.2.15</ecNumber>
    </recommendedName>
</protein>
<name>THIQ_SALPA</name>
<keyword id="KW-0067">ATP-binding</keyword>
<keyword id="KW-0997">Cell inner membrane</keyword>
<keyword id="KW-1003">Cell membrane</keyword>
<keyword id="KW-0472">Membrane</keyword>
<keyword id="KW-0547">Nucleotide-binding</keyword>
<keyword id="KW-1278">Translocase</keyword>
<keyword id="KW-0813">Transport</keyword>
<proteinExistence type="inferred from homology"/>
<organism>
    <name type="scientific">Salmonella paratyphi A (strain ATCC 9150 / SARB42)</name>
    <dbReference type="NCBI Taxonomy" id="295319"/>
    <lineage>
        <taxon>Bacteria</taxon>
        <taxon>Pseudomonadati</taxon>
        <taxon>Pseudomonadota</taxon>
        <taxon>Gammaproteobacteria</taxon>
        <taxon>Enterobacterales</taxon>
        <taxon>Enterobacteriaceae</taxon>
        <taxon>Salmonella</taxon>
    </lineage>
</organism>
<reference key="1">
    <citation type="journal article" date="2004" name="Nat. Genet.">
        <title>Comparison of genome degradation in Paratyphi A and Typhi, human-restricted serovars of Salmonella enterica that cause typhoid.</title>
        <authorList>
            <person name="McClelland M."/>
            <person name="Sanderson K.E."/>
            <person name="Clifton S.W."/>
            <person name="Latreille P."/>
            <person name="Porwollik S."/>
            <person name="Sabo A."/>
            <person name="Meyer R."/>
            <person name="Bieri T."/>
            <person name="Ozersky P."/>
            <person name="McLellan M."/>
            <person name="Harkins C.R."/>
            <person name="Wang C."/>
            <person name="Nguyen C."/>
            <person name="Berghoff A."/>
            <person name="Elliott G."/>
            <person name="Kohlberg S."/>
            <person name="Strong C."/>
            <person name="Du F."/>
            <person name="Carter J."/>
            <person name="Kremizki C."/>
            <person name="Layman D."/>
            <person name="Leonard S."/>
            <person name="Sun H."/>
            <person name="Fulton L."/>
            <person name="Nash W."/>
            <person name="Miner T."/>
            <person name="Minx P."/>
            <person name="Delehaunty K."/>
            <person name="Fronick C."/>
            <person name="Magrini V."/>
            <person name="Nhan M."/>
            <person name="Warren W."/>
            <person name="Florea L."/>
            <person name="Spieth J."/>
            <person name="Wilson R.K."/>
        </authorList>
    </citation>
    <scope>NUCLEOTIDE SEQUENCE [LARGE SCALE GENOMIC DNA]</scope>
    <source>
        <strain>ATCC 9150 / SARB42</strain>
    </source>
</reference>
<feature type="chain" id="PRO_0000274455" description="Thiamine import ATP-binding protein ThiQ">
    <location>
        <begin position="1"/>
        <end position="235"/>
    </location>
</feature>
<feature type="domain" description="ABC transporter" evidence="1">
    <location>
        <begin position="2"/>
        <end position="230"/>
    </location>
</feature>
<feature type="binding site" evidence="1">
    <location>
        <begin position="32"/>
        <end position="39"/>
    </location>
    <ligand>
        <name>ATP</name>
        <dbReference type="ChEBI" id="CHEBI:30616"/>
    </ligand>
</feature>
<gene>
    <name evidence="1" type="primary">thiQ</name>
    <name type="ordered locus">SPA0108</name>
</gene>
<dbReference type="EC" id="7.6.2.15" evidence="1"/>
<dbReference type="EMBL" id="CP000026">
    <property type="protein sequence ID" value="AAV76141.1"/>
    <property type="molecule type" value="Genomic_DNA"/>
</dbReference>
<dbReference type="RefSeq" id="WP_000915976.1">
    <property type="nucleotide sequence ID" value="NC_006511.1"/>
</dbReference>
<dbReference type="SMR" id="Q5PDF8"/>
<dbReference type="KEGG" id="spt:SPA0108"/>
<dbReference type="HOGENOM" id="CLU_000604_1_22_6"/>
<dbReference type="Proteomes" id="UP000008185">
    <property type="component" value="Chromosome"/>
</dbReference>
<dbReference type="GO" id="GO:0005886">
    <property type="term" value="C:plasma membrane"/>
    <property type="evidence" value="ECO:0007669"/>
    <property type="project" value="UniProtKB-SubCell"/>
</dbReference>
<dbReference type="GO" id="GO:0048502">
    <property type="term" value="F:ABC-type thiamine transporter activity"/>
    <property type="evidence" value="ECO:0007669"/>
    <property type="project" value="UniProtKB-EC"/>
</dbReference>
<dbReference type="GO" id="GO:0005524">
    <property type="term" value="F:ATP binding"/>
    <property type="evidence" value="ECO:0007669"/>
    <property type="project" value="UniProtKB-KW"/>
</dbReference>
<dbReference type="GO" id="GO:0016887">
    <property type="term" value="F:ATP hydrolysis activity"/>
    <property type="evidence" value="ECO:0007669"/>
    <property type="project" value="InterPro"/>
</dbReference>
<dbReference type="FunFam" id="3.40.50.300:FF:001071">
    <property type="entry name" value="Thiamine import ATP-binding protein ThiQ"/>
    <property type="match status" value="1"/>
</dbReference>
<dbReference type="Gene3D" id="3.40.50.300">
    <property type="entry name" value="P-loop containing nucleotide triphosphate hydrolases"/>
    <property type="match status" value="1"/>
</dbReference>
<dbReference type="InterPro" id="IPR003593">
    <property type="entry name" value="AAA+_ATPase"/>
</dbReference>
<dbReference type="InterPro" id="IPR050093">
    <property type="entry name" value="ABC_SmlMolc_Importer"/>
</dbReference>
<dbReference type="InterPro" id="IPR003439">
    <property type="entry name" value="ABC_transporter-like_ATP-bd"/>
</dbReference>
<dbReference type="InterPro" id="IPR017871">
    <property type="entry name" value="ABC_transporter-like_CS"/>
</dbReference>
<dbReference type="InterPro" id="IPR027417">
    <property type="entry name" value="P-loop_NTPase"/>
</dbReference>
<dbReference type="InterPro" id="IPR005968">
    <property type="entry name" value="Thiamine_ABC_ThiQ"/>
</dbReference>
<dbReference type="NCBIfam" id="NF008039">
    <property type="entry name" value="PRK10771.1"/>
    <property type="match status" value="1"/>
</dbReference>
<dbReference type="NCBIfam" id="TIGR01277">
    <property type="entry name" value="thiQ"/>
    <property type="match status" value="1"/>
</dbReference>
<dbReference type="PANTHER" id="PTHR42781">
    <property type="entry name" value="SPERMIDINE/PUTRESCINE IMPORT ATP-BINDING PROTEIN POTA"/>
    <property type="match status" value="1"/>
</dbReference>
<dbReference type="PANTHER" id="PTHR42781:SF1">
    <property type="entry name" value="THIAMINE IMPORT ATP-BINDING PROTEIN THIQ"/>
    <property type="match status" value="1"/>
</dbReference>
<dbReference type="Pfam" id="PF00005">
    <property type="entry name" value="ABC_tran"/>
    <property type="match status" value="1"/>
</dbReference>
<dbReference type="SMART" id="SM00382">
    <property type="entry name" value="AAA"/>
    <property type="match status" value="1"/>
</dbReference>
<dbReference type="SUPFAM" id="SSF52540">
    <property type="entry name" value="P-loop containing nucleoside triphosphate hydrolases"/>
    <property type="match status" value="1"/>
</dbReference>
<dbReference type="PROSITE" id="PS00211">
    <property type="entry name" value="ABC_TRANSPORTER_1"/>
    <property type="match status" value="1"/>
</dbReference>
<dbReference type="PROSITE" id="PS50893">
    <property type="entry name" value="ABC_TRANSPORTER_2"/>
    <property type="match status" value="1"/>
</dbReference>
<dbReference type="PROSITE" id="PS51288">
    <property type="entry name" value="THIQ"/>
    <property type="match status" value="1"/>
</dbReference>
<comment type="function">
    <text evidence="1">Part of the ABC transporter complex ThiBPQ involved in thiamine import. Responsible for energy coupling to the transport system.</text>
</comment>
<comment type="catalytic activity">
    <reaction evidence="1">
        <text>thiamine(out) + ATP + H2O = thiamine(in) + ADP + phosphate + H(+)</text>
        <dbReference type="Rhea" id="RHEA:29811"/>
        <dbReference type="ChEBI" id="CHEBI:15377"/>
        <dbReference type="ChEBI" id="CHEBI:15378"/>
        <dbReference type="ChEBI" id="CHEBI:18385"/>
        <dbReference type="ChEBI" id="CHEBI:30616"/>
        <dbReference type="ChEBI" id="CHEBI:43474"/>
        <dbReference type="ChEBI" id="CHEBI:456216"/>
        <dbReference type="EC" id="7.6.2.15"/>
    </reaction>
</comment>
<comment type="subunit">
    <text evidence="1">The complex is composed of two ATP-binding proteins (ThiQ), two transmembrane proteins (ThiP) and a solute-binding protein (ThiB).</text>
</comment>
<comment type="subcellular location">
    <subcellularLocation>
        <location evidence="1">Cell inner membrane</location>
        <topology evidence="1">Peripheral membrane protein</topology>
    </subcellularLocation>
</comment>
<comment type="similarity">
    <text evidence="1">Belongs to the ABC transporter superfamily. Thiamine importer (TC 3.A.1.19.1) family.</text>
</comment>